<feature type="chain" id="PRO_1000056138" description="Bifunctional protein GlmU">
    <location>
        <begin position="1"/>
        <end position="456"/>
    </location>
</feature>
<feature type="region of interest" description="Pyrophosphorylase" evidence="1">
    <location>
        <begin position="1"/>
        <end position="230"/>
    </location>
</feature>
<feature type="region of interest" description="Linker" evidence="1">
    <location>
        <begin position="231"/>
        <end position="251"/>
    </location>
</feature>
<feature type="region of interest" description="N-acetyltransferase" evidence="1">
    <location>
        <begin position="252"/>
        <end position="456"/>
    </location>
</feature>
<feature type="active site" description="Proton acceptor" evidence="1">
    <location>
        <position position="363"/>
    </location>
</feature>
<feature type="binding site" evidence="1">
    <location>
        <begin position="9"/>
        <end position="12"/>
    </location>
    <ligand>
        <name>UDP-N-acetyl-alpha-D-glucosamine</name>
        <dbReference type="ChEBI" id="CHEBI:57705"/>
    </ligand>
</feature>
<feature type="binding site" evidence="1">
    <location>
        <position position="23"/>
    </location>
    <ligand>
        <name>UDP-N-acetyl-alpha-D-glucosamine</name>
        <dbReference type="ChEBI" id="CHEBI:57705"/>
    </ligand>
</feature>
<feature type="binding site" evidence="1">
    <location>
        <position position="73"/>
    </location>
    <ligand>
        <name>UDP-N-acetyl-alpha-D-glucosamine</name>
        <dbReference type="ChEBI" id="CHEBI:57705"/>
    </ligand>
</feature>
<feature type="binding site" evidence="1">
    <location>
        <begin position="78"/>
        <end position="79"/>
    </location>
    <ligand>
        <name>UDP-N-acetyl-alpha-D-glucosamine</name>
        <dbReference type="ChEBI" id="CHEBI:57705"/>
    </ligand>
</feature>
<feature type="binding site" evidence="1">
    <location>
        <position position="103"/>
    </location>
    <ligand>
        <name>Mg(2+)</name>
        <dbReference type="ChEBI" id="CHEBI:18420"/>
    </ligand>
</feature>
<feature type="binding site" evidence="1">
    <location>
        <position position="140"/>
    </location>
    <ligand>
        <name>UDP-N-acetyl-alpha-D-glucosamine</name>
        <dbReference type="ChEBI" id="CHEBI:57705"/>
    </ligand>
</feature>
<feature type="binding site" evidence="1">
    <location>
        <position position="155"/>
    </location>
    <ligand>
        <name>UDP-N-acetyl-alpha-D-glucosamine</name>
        <dbReference type="ChEBI" id="CHEBI:57705"/>
    </ligand>
</feature>
<feature type="binding site" evidence="1">
    <location>
        <position position="170"/>
    </location>
    <ligand>
        <name>UDP-N-acetyl-alpha-D-glucosamine</name>
        <dbReference type="ChEBI" id="CHEBI:57705"/>
    </ligand>
</feature>
<feature type="binding site" evidence="1">
    <location>
        <position position="228"/>
    </location>
    <ligand>
        <name>Mg(2+)</name>
        <dbReference type="ChEBI" id="CHEBI:18420"/>
    </ligand>
</feature>
<feature type="binding site" evidence="1">
    <location>
        <position position="228"/>
    </location>
    <ligand>
        <name>UDP-N-acetyl-alpha-D-glucosamine</name>
        <dbReference type="ChEBI" id="CHEBI:57705"/>
    </ligand>
</feature>
<feature type="binding site" evidence="1">
    <location>
        <position position="333"/>
    </location>
    <ligand>
        <name>UDP-N-acetyl-alpha-D-glucosamine</name>
        <dbReference type="ChEBI" id="CHEBI:57705"/>
    </ligand>
</feature>
<feature type="binding site" evidence="1">
    <location>
        <position position="351"/>
    </location>
    <ligand>
        <name>UDP-N-acetyl-alpha-D-glucosamine</name>
        <dbReference type="ChEBI" id="CHEBI:57705"/>
    </ligand>
</feature>
<feature type="binding site" evidence="1">
    <location>
        <position position="366"/>
    </location>
    <ligand>
        <name>UDP-N-acetyl-alpha-D-glucosamine</name>
        <dbReference type="ChEBI" id="CHEBI:57705"/>
    </ligand>
</feature>
<feature type="binding site" evidence="1">
    <location>
        <position position="377"/>
    </location>
    <ligand>
        <name>UDP-N-acetyl-alpha-D-glucosamine</name>
        <dbReference type="ChEBI" id="CHEBI:57705"/>
    </ligand>
</feature>
<feature type="binding site" evidence="1">
    <location>
        <begin position="386"/>
        <end position="387"/>
    </location>
    <ligand>
        <name>acetyl-CoA</name>
        <dbReference type="ChEBI" id="CHEBI:57288"/>
    </ligand>
</feature>
<feature type="binding site" evidence="1">
    <location>
        <position position="423"/>
    </location>
    <ligand>
        <name>acetyl-CoA</name>
        <dbReference type="ChEBI" id="CHEBI:57288"/>
    </ligand>
</feature>
<feature type="binding site" evidence="1">
    <location>
        <position position="440"/>
    </location>
    <ligand>
        <name>acetyl-CoA</name>
        <dbReference type="ChEBI" id="CHEBI:57288"/>
    </ligand>
</feature>
<comment type="function">
    <text evidence="1">Catalyzes the last two sequential reactions in the de novo biosynthetic pathway for UDP-N-acetylglucosamine (UDP-GlcNAc). The C-terminal domain catalyzes the transfer of acetyl group from acetyl coenzyme A to glucosamine-1-phosphate (GlcN-1-P) to produce N-acetylglucosamine-1-phosphate (GlcNAc-1-P), which is converted into UDP-GlcNAc by the transfer of uridine 5-monophosphate (from uridine 5-triphosphate), a reaction catalyzed by the N-terminal domain.</text>
</comment>
<comment type="catalytic activity">
    <reaction evidence="1">
        <text>alpha-D-glucosamine 1-phosphate + acetyl-CoA = N-acetyl-alpha-D-glucosamine 1-phosphate + CoA + H(+)</text>
        <dbReference type="Rhea" id="RHEA:13725"/>
        <dbReference type="ChEBI" id="CHEBI:15378"/>
        <dbReference type="ChEBI" id="CHEBI:57287"/>
        <dbReference type="ChEBI" id="CHEBI:57288"/>
        <dbReference type="ChEBI" id="CHEBI:57776"/>
        <dbReference type="ChEBI" id="CHEBI:58516"/>
        <dbReference type="EC" id="2.3.1.157"/>
    </reaction>
</comment>
<comment type="catalytic activity">
    <reaction evidence="1">
        <text>N-acetyl-alpha-D-glucosamine 1-phosphate + UTP + H(+) = UDP-N-acetyl-alpha-D-glucosamine + diphosphate</text>
        <dbReference type="Rhea" id="RHEA:13509"/>
        <dbReference type="ChEBI" id="CHEBI:15378"/>
        <dbReference type="ChEBI" id="CHEBI:33019"/>
        <dbReference type="ChEBI" id="CHEBI:46398"/>
        <dbReference type="ChEBI" id="CHEBI:57705"/>
        <dbReference type="ChEBI" id="CHEBI:57776"/>
        <dbReference type="EC" id="2.7.7.23"/>
    </reaction>
</comment>
<comment type="cofactor">
    <cofactor evidence="1">
        <name>Mg(2+)</name>
        <dbReference type="ChEBI" id="CHEBI:18420"/>
    </cofactor>
    <text evidence="1">Binds 1 Mg(2+) ion per subunit.</text>
</comment>
<comment type="pathway">
    <text evidence="1">Nucleotide-sugar biosynthesis; UDP-N-acetyl-alpha-D-glucosamine biosynthesis; N-acetyl-alpha-D-glucosamine 1-phosphate from alpha-D-glucosamine 6-phosphate (route II): step 2/2.</text>
</comment>
<comment type="pathway">
    <text evidence="1">Nucleotide-sugar biosynthesis; UDP-N-acetyl-alpha-D-glucosamine biosynthesis; UDP-N-acetyl-alpha-D-glucosamine from N-acetyl-alpha-D-glucosamine 1-phosphate: step 1/1.</text>
</comment>
<comment type="pathway">
    <text evidence="1">Bacterial outer membrane biogenesis; LPS lipid A biosynthesis.</text>
</comment>
<comment type="subunit">
    <text evidence="1">Homotrimer.</text>
</comment>
<comment type="subcellular location">
    <subcellularLocation>
        <location evidence="1">Cytoplasm</location>
    </subcellularLocation>
</comment>
<comment type="similarity">
    <text evidence="1">In the N-terminal section; belongs to the N-acetylglucosamine-1-phosphate uridyltransferase family.</text>
</comment>
<comment type="similarity">
    <text evidence="1">In the C-terminal section; belongs to the transferase hexapeptide repeat family.</text>
</comment>
<gene>
    <name evidence="1" type="primary">glmU</name>
    <name type="ordered locus">RBAM_000590</name>
</gene>
<proteinExistence type="inferred from homology"/>
<dbReference type="EC" id="2.7.7.23" evidence="1"/>
<dbReference type="EC" id="2.3.1.157" evidence="1"/>
<dbReference type="EMBL" id="CP000560">
    <property type="protein sequence ID" value="ABS72499.1"/>
    <property type="molecule type" value="Genomic_DNA"/>
</dbReference>
<dbReference type="RefSeq" id="WP_004264658.1">
    <property type="nucleotide sequence ID" value="NC_009725.2"/>
</dbReference>
<dbReference type="SMR" id="A7Z0H3"/>
<dbReference type="GeneID" id="93079197"/>
<dbReference type="KEGG" id="bay:RBAM_000590"/>
<dbReference type="HOGENOM" id="CLU_029499_15_2_9"/>
<dbReference type="UniPathway" id="UPA00113">
    <property type="reaction ID" value="UER00532"/>
</dbReference>
<dbReference type="UniPathway" id="UPA00113">
    <property type="reaction ID" value="UER00533"/>
</dbReference>
<dbReference type="UniPathway" id="UPA00973"/>
<dbReference type="Proteomes" id="UP000001120">
    <property type="component" value="Chromosome"/>
</dbReference>
<dbReference type="GO" id="GO:0005737">
    <property type="term" value="C:cytoplasm"/>
    <property type="evidence" value="ECO:0007669"/>
    <property type="project" value="UniProtKB-SubCell"/>
</dbReference>
<dbReference type="GO" id="GO:0016020">
    <property type="term" value="C:membrane"/>
    <property type="evidence" value="ECO:0007669"/>
    <property type="project" value="GOC"/>
</dbReference>
<dbReference type="GO" id="GO:0019134">
    <property type="term" value="F:glucosamine-1-phosphate N-acetyltransferase activity"/>
    <property type="evidence" value="ECO:0007669"/>
    <property type="project" value="UniProtKB-UniRule"/>
</dbReference>
<dbReference type="GO" id="GO:0000287">
    <property type="term" value="F:magnesium ion binding"/>
    <property type="evidence" value="ECO:0007669"/>
    <property type="project" value="UniProtKB-UniRule"/>
</dbReference>
<dbReference type="GO" id="GO:0003977">
    <property type="term" value="F:UDP-N-acetylglucosamine diphosphorylase activity"/>
    <property type="evidence" value="ECO:0007669"/>
    <property type="project" value="UniProtKB-UniRule"/>
</dbReference>
<dbReference type="GO" id="GO:0000902">
    <property type="term" value="P:cell morphogenesis"/>
    <property type="evidence" value="ECO:0007669"/>
    <property type="project" value="UniProtKB-UniRule"/>
</dbReference>
<dbReference type="GO" id="GO:0071555">
    <property type="term" value="P:cell wall organization"/>
    <property type="evidence" value="ECO:0007669"/>
    <property type="project" value="UniProtKB-KW"/>
</dbReference>
<dbReference type="GO" id="GO:0009245">
    <property type="term" value="P:lipid A biosynthetic process"/>
    <property type="evidence" value="ECO:0007669"/>
    <property type="project" value="UniProtKB-UniRule"/>
</dbReference>
<dbReference type="GO" id="GO:0009252">
    <property type="term" value="P:peptidoglycan biosynthetic process"/>
    <property type="evidence" value="ECO:0007669"/>
    <property type="project" value="UniProtKB-UniRule"/>
</dbReference>
<dbReference type="GO" id="GO:0008360">
    <property type="term" value="P:regulation of cell shape"/>
    <property type="evidence" value="ECO:0007669"/>
    <property type="project" value="UniProtKB-KW"/>
</dbReference>
<dbReference type="GO" id="GO:0006048">
    <property type="term" value="P:UDP-N-acetylglucosamine biosynthetic process"/>
    <property type="evidence" value="ECO:0007669"/>
    <property type="project" value="UniProtKB-UniPathway"/>
</dbReference>
<dbReference type="CDD" id="cd02540">
    <property type="entry name" value="GT2_GlmU_N_bac"/>
    <property type="match status" value="1"/>
</dbReference>
<dbReference type="CDD" id="cd03353">
    <property type="entry name" value="LbH_GlmU_C"/>
    <property type="match status" value="1"/>
</dbReference>
<dbReference type="Gene3D" id="2.160.10.10">
    <property type="entry name" value="Hexapeptide repeat proteins"/>
    <property type="match status" value="1"/>
</dbReference>
<dbReference type="Gene3D" id="3.90.550.10">
    <property type="entry name" value="Spore Coat Polysaccharide Biosynthesis Protein SpsA, Chain A"/>
    <property type="match status" value="1"/>
</dbReference>
<dbReference type="HAMAP" id="MF_01631">
    <property type="entry name" value="GlmU"/>
    <property type="match status" value="1"/>
</dbReference>
<dbReference type="InterPro" id="IPR005882">
    <property type="entry name" value="Bifunctional_GlmU"/>
</dbReference>
<dbReference type="InterPro" id="IPR050065">
    <property type="entry name" value="GlmU-like"/>
</dbReference>
<dbReference type="InterPro" id="IPR038009">
    <property type="entry name" value="GlmU_C_LbH"/>
</dbReference>
<dbReference type="InterPro" id="IPR001451">
    <property type="entry name" value="Hexapep"/>
</dbReference>
<dbReference type="InterPro" id="IPR018357">
    <property type="entry name" value="Hexapep_transf_CS"/>
</dbReference>
<dbReference type="InterPro" id="IPR005835">
    <property type="entry name" value="NTP_transferase_dom"/>
</dbReference>
<dbReference type="InterPro" id="IPR029044">
    <property type="entry name" value="Nucleotide-diphossugar_trans"/>
</dbReference>
<dbReference type="InterPro" id="IPR011004">
    <property type="entry name" value="Trimer_LpxA-like_sf"/>
</dbReference>
<dbReference type="NCBIfam" id="TIGR01173">
    <property type="entry name" value="glmU"/>
    <property type="match status" value="1"/>
</dbReference>
<dbReference type="NCBIfam" id="NF010934">
    <property type="entry name" value="PRK14354.1"/>
    <property type="match status" value="1"/>
</dbReference>
<dbReference type="PANTHER" id="PTHR43584:SF3">
    <property type="entry name" value="BIFUNCTIONAL PROTEIN GLMU"/>
    <property type="match status" value="1"/>
</dbReference>
<dbReference type="PANTHER" id="PTHR43584">
    <property type="entry name" value="NUCLEOTIDYL TRANSFERASE"/>
    <property type="match status" value="1"/>
</dbReference>
<dbReference type="Pfam" id="PF00132">
    <property type="entry name" value="Hexapep"/>
    <property type="match status" value="3"/>
</dbReference>
<dbReference type="Pfam" id="PF00483">
    <property type="entry name" value="NTP_transferase"/>
    <property type="match status" value="1"/>
</dbReference>
<dbReference type="SUPFAM" id="SSF53448">
    <property type="entry name" value="Nucleotide-diphospho-sugar transferases"/>
    <property type="match status" value="1"/>
</dbReference>
<dbReference type="SUPFAM" id="SSF51161">
    <property type="entry name" value="Trimeric LpxA-like enzymes"/>
    <property type="match status" value="1"/>
</dbReference>
<dbReference type="PROSITE" id="PS00101">
    <property type="entry name" value="HEXAPEP_TRANSFERASES"/>
    <property type="match status" value="1"/>
</dbReference>
<sequence>MDKRFAVILAAGKGTRMKSKLYKVLHPVCGKPMVEHVADEALKLSLAKLVTIVGHGAEDVKKQLGQKSDYALQAEQLGTAHAVKQAKPFLHGEKGVTIVICGDTPLLTAETMEAMLNEHTDKGAKATVLTAVADDPAGYGRIIRSEDGAVQKIVEHKDASEQERLVKEINTGTYCFDNEALFRVIEQVSNENAQGEYYLPDVIEILKDEGETVAAYQTGNFQETLGVNDRVALSQAEMYMKERINKRHMQNGVTLIDPMNTYISPDARIGQDTVIYPGTVLKGQAEIGDECVIGPHTEIEDSSIGSRTVIKQSVVNRSKVGNDVNIGPFAHIRPDSAIGNEVKIGNFVEIKKTQFGDRSKASHLSYIGDAEVGTDVNLGCGSITVNYDGKKKYLTKIEDGAFIGCNSNLVAPVTVGEGAYVAAGSTVTEDVPGEALAIARARQVNKEDYVKNIHKK</sequence>
<organism>
    <name type="scientific">Bacillus velezensis (strain DSM 23117 / BGSC 10A6 / LMG 26770 / FZB42)</name>
    <name type="common">Bacillus amyloliquefaciens subsp. plantarum</name>
    <dbReference type="NCBI Taxonomy" id="326423"/>
    <lineage>
        <taxon>Bacteria</taxon>
        <taxon>Bacillati</taxon>
        <taxon>Bacillota</taxon>
        <taxon>Bacilli</taxon>
        <taxon>Bacillales</taxon>
        <taxon>Bacillaceae</taxon>
        <taxon>Bacillus</taxon>
        <taxon>Bacillus amyloliquefaciens group</taxon>
    </lineage>
</organism>
<accession>A7Z0H3</accession>
<name>GLMU_BACVZ</name>
<keyword id="KW-0012">Acyltransferase</keyword>
<keyword id="KW-0133">Cell shape</keyword>
<keyword id="KW-0961">Cell wall biogenesis/degradation</keyword>
<keyword id="KW-0963">Cytoplasm</keyword>
<keyword id="KW-0460">Magnesium</keyword>
<keyword id="KW-0479">Metal-binding</keyword>
<keyword id="KW-0511">Multifunctional enzyme</keyword>
<keyword id="KW-0548">Nucleotidyltransferase</keyword>
<keyword id="KW-0573">Peptidoglycan synthesis</keyword>
<keyword id="KW-0677">Repeat</keyword>
<keyword id="KW-0808">Transferase</keyword>
<reference key="1">
    <citation type="journal article" date="2007" name="Nat. Biotechnol.">
        <title>Comparative analysis of the complete genome sequence of the plant growth-promoting bacterium Bacillus amyloliquefaciens FZB42.</title>
        <authorList>
            <person name="Chen X.H."/>
            <person name="Koumoutsi A."/>
            <person name="Scholz R."/>
            <person name="Eisenreich A."/>
            <person name="Schneider K."/>
            <person name="Heinemeyer I."/>
            <person name="Morgenstern B."/>
            <person name="Voss B."/>
            <person name="Hess W.R."/>
            <person name="Reva O."/>
            <person name="Junge H."/>
            <person name="Voigt B."/>
            <person name="Jungblut P.R."/>
            <person name="Vater J."/>
            <person name="Suessmuth R."/>
            <person name="Liesegang H."/>
            <person name="Strittmatter A."/>
            <person name="Gottschalk G."/>
            <person name="Borriss R."/>
        </authorList>
    </citation>
    <scope>NUCLEOTIDE SEQUENCE [LARGE SCALE GENOMIC DNA]</scope>
    <source>
        <strain>DSM 23117 / BGSC 10A6 / LMG 26770 / FZB42</strain>
    </source>
</reference>
<protein>
    <recommendedName>
        <fullName evidence="1">Bifunctional protein GlmU</fullName>
    </recommendedName>
    <domain>
        <recommendedName>
            <fullName evidence="1">UDP-N-acetylglucosamine pyrophosphorylase</fullName>
            <ecNumber evidence="1">2.7.7.23</ecNumber>
        </recommendedName>
        <alternativeName>
            <fullName evidence="1">N-acetylglucosamine-1-phosphate uridyltransferase</fullName>
        </alternativeName>
    </domain>
    <domain>
        <recommendedName>
            <fullName evidence="1">Glucosamine-1-phosphate N-acetyltransferase</fullName>
            <ecNumber evidence="1">2.3.1.157</ecNumber>
        </recommendedName>
    </domain>
</protein>
<evidence type="ECO:0000255" key="1">
    <source>
        <dbReference type="HAMAP-Rule" id="MF_01631"/>
    </source>
</evidence>